<reference key="1">
    <citation type="journal article" date="2001" name="Nature">
        <title>Genome sequence and gene compaction of the eukaryote parasite Encephalitozoon cuniculi.</title>
        <authorList>
            <person name="Katinka M.D."/>
            <person name="Duprat S."/>
            <person name="Cornillot E."/>
            <person name="Metenier G."/>
            <person name="Thomarat F."/>
            <person name="Prensier G."/>
            <person name="Barbe V."/>
            <person name="Peyretaillade E."/>
            <person name="Brottier P."/>
            <person name="Wincker P."/>
            <person name="Delbac F."/>
            <person name="El Alaoui H."/>
            <person name="Peyret P."/>
            <person name="Saurin W."/>
            <person name="Gouy M."/>
            <person name="Weissenbach J."/>
            <person name="Vivares C.P."/>
        </authorList>
    </citation>
    <scope>NUCLEOTIDE SEQUENCE [LARGE SCALE GENOMIC DNA]</scope>
    <source>
        <strain>GB-M1</strain>
    </source>
</reference>
<reference key="2">
    <citation type="journal article" date="2009" name="BMC Genomics">
        <title>Identification of transcriptional signals in Encephalitozoon cuniculi widespread among Microsporidia phylum: support for accurate structural genome annotation.</title>
        <authorList>
            <person name="Peyretaillade E."/>
            <person name="Goncalves O."/>
            <person name="Terrat S."/>
            <person name="Dugat-Bony E."/>
            <person name="Wincker P."/>
            <person name="Cornman R.S."/>
            <person name="Evans J.D."/>
            <person name="Delbac F."/>
            <person name="Peyret P."/>
        </authorList>
    </citation>
    <scope>GENOME REANNOTATION</scope>
    <source>
        <strain>GB-M1</strain>
    </source>
</reference>
<reference key="3">
    <citation type="journal article" date="2006" name="Proteomics">
        <title>Proteomic analysis of the eukaryotic parasite Encephalitozoon cuniculi (microsporidia): a reference map for proteins expressed in late sporogonial stages.</title>
        <authorList>
            <person name="Brosson D."/>
            <person name="Kuhn L."/>
            <person name="Delbac F."/>
            <person name="Garin J."/>
            <person name="Vivares C.P."/>
            <person name="Texier C."/>
        </authorList>
    </citation>
    <scope>IDENTIFICATION BY MASS SPECTROMETRY [LARGE SCALE ANALYSIS]</scope>
    <scope>DEVELOPMENTAL STAGE</scope>
</reference>
<protein>
    <recommendedName>
        <fullName evidence="2">Small ribosomal subunit protein uS3</fullName>
    </recommendedName>
    <alternativeName>
        <fullName>40S ribosomal protein S3</fullName>
    </alternativeName>
</protein>
<evidence type="ECO:0000269" key="1">
    <source>
    </source>
</evidence>
<evidence type="ECO:0000305" key="2"/>
<dbReference type="EMBL" id="AL590451">
    <property type="protein sequence ID" value="CAD27095.2"/>
    <property type="molecule type" value="Genomic_DNA"/>
</dbReference>
<dbReference type="RefSeq" id="XP_955676.1">
    <property type="nucleotide sequence ID" value="XM_950583.1"/>
</dbReference>
<dbReference type="PDB" id="7QEP">
    <property type="method" value="EM"/>
    <property type="resolution" value="2.70 A"/>
    <property type="chains" value="S3=1-216"/>
</dbReference>
<dbReference type="PDBsum" id="7QEP"/>
<dbReference type="EMDB" id="EMD-13936"/>
<dbReference type="SMR" id="Q8SQM3"/>
<dbReference type="FunCoup" id="Q8SQM3">
    <property type="interactions" value="226"/>
</dbReference>
<dbReference type="STRING" id="284813.Q8SQM3"/>
<dbReference type="VEuPathDB" id="MicrosporidiaDB:ECU09_1250"/>
<dbReference type="HOGENOM" id="CLU_058591_2_1_1"/>
<dbReference type="InParanoid" id="Q8SQM3"/>
<dbReference type="OrthoDB" id="10248446at2759"/>
<dbReference type="Proteomes" id="UP000000819">
    <property type="component" value="Chromosome IX"/>
</dbReference>
<dbReference type="GO" id="GO:0022627">
    <property type="term" value="C:cytosolic small ribosomal subunit"/>
    <property type="evidence" value="ECO:0007669"/>
    <property type="project" value="TreeGrafter"/>
</dbReference>
<dbReference type="GO" id="GO:0005634">
    <property type="term" value="C:nucleus"/>
    <property type="evidence" value="ECO:0007669"/>
    <property type="project" value="TreeGrafter"/>
</dbReference>
<dbReference type="GO" id="GO:0003723">
    <property type="term" value="F:RNA binding"/>
    <property type="evidence" value="ECO:0007669"/>
    <property type="project" value="UniProtKB-KW"/>
</dbReference>
<dbReference type="GO" id="GO:0003735">
    <property type="term" value="F:structural constituent of ribosome"/>
    <property type="evidence" value="ECO:0007669"/>
    <property type="project" value="InterPro"/>
</dbReference>
<dbReference type="GO" id="GO:0006412">
    <property type="term" value="P:translation"/>
    <property type="evidence" value="ECO:0007669"/>
    <property type="project" value="InterPro"/>
</dbReference>
<dbReference type="CDD" id="cd02413">
    <property type="entry name" value="KH-II_40S_S3"/>
    <property type="match status" value="1"/>
</dbReference>
<dbReference type="Gene3D" id="3.30.300.20">
    <property type="match status" value="1"/>
</dbReference>
<dbReference type="Gene3D" id="3.30.1140.32">
    <property type="entry name" value="Ribosomal protein S3, C-terminal domain"/>
    <property type="match status" value="1"/>
</dbReference>
<dbReference type="InterPro" id="IPR015946">
    <property type="entry name" value="KH_dom-like_a/b"/>
</dbReference>
<dbReference type="InterPro" id="IPR009019">
    <property type="entry name" value="KH_sf_prok-type"/>
</dbReference>
<dbReference type="InterPro" id="IPR036419">
    <property type="entry name" value="Ribosomal_S3_C_sf"/>
</dbReference>
<dbReference type="InterPro" id="IPR001351">
    <property type="entry name" value="Ribosomal_uS3_C"/>
</dbReference>
<dbReference type="InterPro" id="IPR018280">
    <property type="entry name" value="Ribosomal_uS3_CS"/>
</dbReference>
<dbReference type="InterPro" id="IPR005703">
    <property type="entry name" value="Ribosomal_uS3_euk/arc"/>
</dbReference>
<dbReference type="NCBIfam" id="TIGR01008">
    <property type="entry name" value="uS3_euk_arch"/>
    <property type="match status" value="1"/>
</dbReference>
<dbReference type="PANTHER" id="PTHR11760">
    <property type="entry name" value="30S/40S RIBOSOMAL PROTEIN S3"/>
    <property type="match status" value="1"/>
</dbReference>
<dbReference type="PANTHER" id="PTHR11760:SF32">
    <property type="entry name" value="SMALL RIBOSOMAL SUBUNIT PROTEIN US3"/>
    <property type="match status" value="1"/>
</dbReference>
<dbReference type="Pfam" id="PF00189">
    <property type="entry name" value="Ribosomal_S3_C"/>
    <property type="match status" value="1"/>
</dbReference>
<dbReference type="SUPFAM" id="SSF54814">
    <property type="entry name" value="Prokaryotic type KH domain (KH-domain type II)"/>
    <property type="match status" value="1"/>
</dbReference>
<dbReference type="SUPFAM" id="SSF54821">
    <property type="entry name" value="Ribosomal protein S3 C-terminal domain"/>
    <property type="match status" value="1"/>
</dbReference>
<dbReference type="PROSITE" id="PS00548">
    <property type="entry name" value="RIBOSOMAL_S3"/>
    <property type="match status" value="1"/>
</dbReference>
<name>RS3_ENCCU</name>
<feature type="chain" id="PRO_0000130330" description="Small ribosomal subunit protein uS3">
    <location>
        <begin position="1"/>
        <end position="216"/>
    </location>
</feature>
<feature type="domain" description="KH type-2">
    <location>
        <begin position="20"/>
        <end position="91"/>
    </location>
</feature>
<sequence length="216" mass="24282">MSSDQVLERFMKNGLMNAELKEFFEKALVNEGFSTMELRMQETPIKIILKVAKPHEAIGEKKFRLRQFQHLAAQRLEVPDESVEIVVEKVHEKGLCALIQANFIREKILGGVQYRRAVNMALKTARHAKAQGCQIIVSGKLKGQRAKSVKFQDGVLIHSGDAVKDYINTGYATVETKQGVIGIQVRIMLPYDPEGVLGPNYPLPDRITILEPSEIQ</sequence>
<proteinExistence type="evidence at protein level"/>
<comment type="developmental stage">
    <text evidence="1">Expressed in late sporogonial stages.</text>
</comment>
<comment type="similarity">
    <text evidence="2">Belongs to the universal ribosomal protein uS3 family.</text>
</comment>
<accession>Q8SQM3</accession>
<gene>
    <name type="primary">RPS3</name>
    <name type="ordered locus">ECU09_1250</name>
</gene>
<organism>
    <name type="scientific">Encephalitozoon cuniculi (strain GB-M1)</name>
    <name type="common">Microsporidian parasite</name>
    <dbReference type="NCBI Taxonomy" id="284813"/>
    <lineage>
        <taxon>Eukaryota</taxon>
        <taxon>Fungi</taxon>
        <taxon>Fungi incertae sedis</taxon>
        <taxon>Microsporidia</taxon>
        <taxon>Unikaryonidae</taxon>
        <taxon>Encephalitozoon</taxon>
    </lineage>
</organism>
<keyword id="KW-0002">3D-structure</keyword>
<keyword id="KW-1185">Reference proteome</keyword>
<keyword id="KW-0687">Ribonucleoprotein</keyword>
<keyword id="KW-0689">Ribosomal protein</keyword>
<keyword id="KW-0694">RNA-binding</keyword>